<name>LON_NEOSM</name>
<evidence type="ECO:0000255" key="1">
    <source>
        <dbReference type="HAMAP-Rule" id="MF_01973"/>
    </source>
</evidence>
<evidence type="ECO:0000255" key="2">
    <source>
        <dbReference type="PROSITE-ProRule" id="PRU01122"/>
    </source>
</evidence>
<evidence type="ECO:0000255" key="3">
    <source>
        <dbReference type="PROSITE-ProRule" id="PRU01123"/>
    </source>
</evidence>
<evidence type="ECO:0000256" key="4">
    <source>
        <dbReference type="SAM" id="MobiDB-lite"/>
    </source>
</evidence>
<accession>Q2GE60</accession>
<protein>
    <recommendedName>
        <fullName evidence="1">Lon protease</fullName>
        <ecNumber evidence="1">3.4.21.53</ecNumber>
    </recommendedName>
    <alternativeName>
        <fullName evidence="1">ATP-dependent protease La</fullName>
    </alternativeName>
</protein>
<comment type="function">
    <text evidence="1">ATP-dependent serine protease that mediates the selective degradation of mutant and abnormal proteins as well as certain short-lived regulatory proteins. Required for cellular homeostasis and for survival from DNA damage and developmental changes induced by stress. Degrades polypeptides processively to yield small peptide fragments that are 5 to 10 amino acids long. Binds to DNA in a double-stranded, site-specific manner.</text>
</comment>
<comment type="catalytic activity">
    <reaction evidence="1">
        <text>Hydrolysis of proteins in presence of ATP.</text>
        <dbReference type="EC" id="3.4.21.53"/>
    </reaction>
</comment>
<comment type="subunit">
    <text evidence="1">Homohexamer. Organized in a ring with a central cavity.</text>
</comment>
<comment type="subcellular location">
    <subcellularLocation>
        <location evidence="1">Cytoplasm</location>
    </subcellularLocation>
</comment>
<comment type="induction">
    <text evidence="1">By heat shock.</text>
</comment>
<comment type="similarity">
    <text evidence="1">Belongs to the peptidase S16 family.</text>
</comment>
<proteinExistence type="inferred from homology"/>
<feature type="chain" id="PRO_0000396586" description="Lon protease">
    <location>
        <begin position="1"/>
        <end position="826"/>
    </location>
</feature>
<feature type="domain" description="Lon N-terminal" evidence="3">
    <location>
        <begin position="33"/>
        <end position="231"/>
    </location>
</feature>
<feature type="domain" description="Lon proteolytic" evidence="2">
    <location>
        <begin position="620"/>
        <end position="801"/>
    </location>
</feature>
<feature type="region of interest" description="Disordered" evidence="4">
    <location>
        <begin position="1"/>
        <end position="27"/>
    </location>
</feature>
<feature type="compositionally biased region" description="Basic and acidic residues" evidence="4">
    <location>
        <begin position="1"/>
        <end position="20"/>
    </location>
</feature>
<feature type="active site" evidence="1">
    <location>
        <position position="707"/>
    </location>
</feature>
<feature type="active site" evidence="1">
    <location>
        <position position="750"/>
    </location>
</feature>
<feature type="binding site" evidence="1">
    <location>
        <begin position="384"/>
        <end position="391"/>
    </location>
    <ligand>
        <name>ATP</name>
        <dbReference type="ChEBI" id="CHEBI:30616"/>
    </ligand>
</feature>
<reference key="1">
    <citation type="journal article" date="2006" name="PLoS Genet.">
        <title>Comparative genomics of emerging human ehrlichiosis agents.</title>
        <authorList>
            <person name="Dunning Hotopp J.C."/>
            <person name="Lin M."/>
            <person name="Madupu R."/>
            <person name="Crabtree J."/>
            <person name="Angiuoli S.V."/>
            <person name="Eisen J.A."/>
            <person name="Seshadri R."/>
            <person name="Ren Q."/>
            <person name="Wu M."/>
            <person name="Utterback T.R."/>
            <person name="Smith S."/>
            <person name="Lewis M."/>
            <person name="Khouri H."/>
            <person name="Zhang C."/>
            <person name="Niu H."/>
            <person name="Lin Q."/>
            <person name="Ohashi N."/>
            <person name="Zhi N."/>
            <person name="Nelson W.C."/>
            <person name="Brinkac L.M."/>
            <person name="Dodson R.J."/>
            <person name="Rosovitz M.J."/>
            <person name="Sundaram J.P."/>
            <person name="Daugherty S.C."/>
            <person name="Davidsen T."/>
            <person name="Durkin A.S."/>
            <person name="Gwinn M.L."/>
            <person name="Haft D.H."/>
            <person name="Selengut J.D."/>
            <person name="Sullivan S.A."/>
            <person name="Zafar N."/>
            <person name="Zhou L."/>
            <person name="Benahmed F."/>
            <person name="Forberger H."/>
            <person name="Halpin R."/>
            <person name="Mulligan S."/>
            <person name="Robinson J."/>
            <person name="White O."/>
            <person name="Rikihisa Y."/>
            <person name="Tettelin H."/>
        </authorList>
    </citation>
    <scope>NUCLEOTIDE SEQUENCE [LARGE SCALE GENOMIC DNA]</scope>
    <source>
        <strain>ATCC VR-367 / Miyayama</strain>
    </source>
</reference>
<organism>
    <name type="scientific">Neorickettsia sennetsu (strain ATCC VR-367 / Miyayama)</name>
    <name type="common">Ehrlichia sennetsu</name>
    <dbReference type="NCBI Taxonomy" id="222891"/>
    <lineage>
        <taxon>Bacteria</taxon>
        <taxon>Pseudomonadati</taxon>
        <taxon>Pseudomonadota</taxon>
        <taxon>Alphaproteobacteria</taxon>
        <taxon>Rickettsiales</taxon>
        <taxon>Anaplasmataceae</taxon>
        <taxon>Neorickettsia</taxon>
    </lineage>
</organism>
<sequence>MSEEELNNRDTESKQEHDENNSNFEAGSAHMNLPVLPLREVIFFPGDYLPIFIGRKGSIQAMDKALAETSENTGRMLLIAQKNPKKEIPEGKDLYEVGVIAKIAEPKINLQDGGVKLMVIVECRARAVNFRKSEGVLEADVLPIEEEESDNVDIEAYRRAVVQNFEKCVKLSETIPDEIIGLLSQIDSTSRIADLVTASINLKLSVKQEILETVDLLERIKKVHALLEKELGVLQVKQQIKEKTESQIKKSHKVYLLNEQLKAITKELYDKEGEEYDELVDLEKKIGNGKLSAEAKEKVSKELKKLKNMVPMSAEATVVRNYVDWIISLPWKKKGKMITDIAASERILKASHYGIEKVKERIIEYLAVQNRTKSFKGSILCLLGPPGVGKTSLASAIAEATGRPFVRMSLGGIKDESEIKGHRRTYIGAMPGKIIQHMKKAKLSNPVFLLDEIDKMSSDFRSDPAFALLEVLDPEQNAHFVDHYLEVEYDLSDVMFVATANSLNMIPALLDRLEIIRLEAYSEEEKLQIAEHYLIGKLQREHGLKKSEWSISKEALKLLIRRYTRESGVRNLKRELANLMRKAVKKLGVQSGLKSIEVSVKNLKKYAGVEKYTFGTAEPENLVGMTTGLAYTQTGGDLIMIEAVLLPGKGEIRSTGKLGEVMQESVQAAYSFVCSNCNKFGFTSKFFKSKDVHLHVPEGATSKDGPSAGVAICTSIVSVMTGIPVRSNVAMTGEVSLRGKVMEIGGLKEKLLAAVRGGIKIVLIPASNEKDLENIPKSVKNAVRIIPVSTVSEALTFTLAEQPTPLAVDVWPDIPLSSTQQSEQRV</sequence>
<dbReference type="EC" id="3.4.21.53" evidence="1"/>
<dbReference type="EMBL" id="CP000237">
    <property type="protein sequence ID" value="ABD45713.1"/>
    <property type="molecule type" value="Genomic_DNA"/>
</dbReference>
<dbReference type="RefSeq" id="WP_011451742.1">
    <property type="nucleotide sequence ID" value="NC_007798.1"/>
</dbReference>
<dbReference type="SMR" id="Q2GE60"/>
<dbReference type="STRING" id="222891.NSE_0347"/>
<dbReference type="MEROPS" id="S16.001"/>
<dbReference type="KEGG" id="nse:NSE_0347"/>
<dbReference type="eggNOG" id="COG0466">
    <property type="taxonomic scope" value="Bacteria"/>
</dbReference>
<dbReference type="HOGENOM" id="CLU_004109_4_3_5"/>
<dbReference type="OrthoDB" id="9803599at2"/>
<dbReference type="Proteomes" id="UP000001942">
    <property type="component" value="Chromosome"/>
</dbReference>
<dbReference type="GO" id="GO:0005737">
    <property type="term" value="C:cytoplasm"/>
    <property type="evidence" value="ECO:0007669"/>
    <property type="project" value="UniProtKB-SubCell"/>
</dbReference>
<dbReference type="GO" id="GO:0005524">
    <property type="term" value="F:ATP binding"/>
    <property type="evidence" value="ECO:0007669"/>
    <property type="project" value="UniProtKB-UniRule"/>
</dbReference>
<dbReference type="GO" id="GO:0016887">
    <property type="term" value="F:ATP hydrolysis activity"/>
    <property type="evidence" value="ECO:0007669"/>
    <property type="project" value="UniProtKB-UniRule"/>
</dbReference>
<dbReference type="GO" id="GO:0004176">
    <property type="term" value="F:ATP-dependent peptidase activity"/>
    <property type="evidence" value="ECO:0007669"/>
    <property type="project" value="UniProtKB-UniRule"/>
</dbReference>
<dbReference type="GO" id="GO:0043565">
    <property type="term" value="F:sequence-specific DNA binding"/>
    <property type="evidence" value="ECO:0007669"/>
    <property type="project" value="UniProtKB-UniRule"/>
</dbReference>
<dbReference type="GO" id="GO:0004252">
    <property type="term" value="F:serine-type endopeptidase activity"/>
    <property type="evidence" value="ECO:0007669"/>
    <property type="project" value="UniProtKB-UniRule"/>
</dbReference>
<dbReference type="GO" id="GO:0034605">
    <property type="term" value="P:cellular response to heat"/>
    <property type="evidence" value="ECO:0007669"/>
    <property type="project" value="UniProtKB-UniRule"/>
</dbReference>
<dbReference type="GO" id="GO:0006515">
    <property type="term" value="P:protein quality control for misfolded or incompletely synthesized proteins"/>
    <property type="evidence" value="ECO:0007669"/>
    <property type="project" value="UniProtKB-UniRule"/>
</dbReference>
<dbReference type="CDD" id="cd19500">
    <property type="entry name" value="RecA-like_Lon"/>
    <property type="match status" value="1"/>
</dbReference>
<dbReference type="FunFam" id="1.20.5.5270:FF:000002">
    <property type="entry name" value="Lon protease homolog"/>
    <property type="match status" value="1"/>
</dbReference>
<dbReference type="FunFam" id="3.40.50.300:FF:000021">
    <property type="entry name" value="Lon protease homolog"/>
    <property type="match status" value="1"/>
</dbReference>
<dbReference type="Gene3D" id="1.10.8.60">
    <property type="match status" value="1"/>
</dbReference>
<dbReference type="Gene3D" id="1.20.5.5270">
    <property type="match status" value="1"/>
</dbReference>
<dbReference type="Gene3D" id="1.20.58.1480">
    <property type="match status" value="1"/>
</dbReference>
<dbReference type="Gene3D" id="3.30.230.10">
    <property type="match status" value="1"/>
</dbReference>
<dbReference type="Gene3D" id="2.30.130.40">
    <property type="entry name" value="LON domain-like"/>
    <property type="match status" value="1"/>
</dbReference>
<dbReference type="Gene3D" id="3.40.50.300">
    <property type="entry name" value="P-loop containing nucleotide triphosphate hydrolases"/>
    <property type="match status" value="1"/>
</dbReference>
<dbReference type="HAMAP" id="MF_01973">
    <property type="entry name" value="lon_bact"/>
    <property type="match status" value="1"/>
</dbReference>
<dbReference type="InterPro" id="IPR003593">
    <property type="entry name" value="AAA+_ATPase"/>
</dbReference>
<dbReference type="InterPro" id="IPR003959">
    <property type="entry name" value="ATPase_AAA_core"/>
</dbReference>
<dbReference type="InterPro" id="IPR027543">
    <property type="entry name" value="Lon_bac"/>
</dbReference>
<dbReference type="InterPro" id="IPR004815">
    <property type="entry name" value="Lon_bac/euk-typ"/>
</dbReference>
<dbReference type="InterPro" id="IPR054594">
    <property type="entry name" value="Lon_lid"/>
</dbReference>
<dbReference type="InterPro" id="IPR008269">
    <property type="entry name" value="Lon_proteolytic"/>
</dbReference>
<dbReference type="InterPro" id="IPR027065">
    <property type="entry name" value="Lon_Prtase"/>
</dbReference>
<dbReference type="InterPro" id="IPR003111">
    <property type="entry name" value="Lon_prtase_N"/>
</dbReference>
<dbReference type="InterPro" id="IPR046336">
    <property type="entry name" value="Lon_prtase_N_sf"/>
</dbReference>
<dbReference type="InterPro" id="IPR027417">
    <property type="entry name" value="P-loop_NTPase"/>
</dbReference>
<dbReference type="InterPro" id="IPR008268">
    <property type="entry name" value="Peptidase_S16_AS"/>
</dbReference>
<dbReference type="InterPro" id="IPR015947">
    <property type="entry name" value="PUA-like_sf"/>
</dbReference>
<dbReference type="InterPro" id="IPR020568">
    <property type="entry name" value="Ribosomal_Su5_D2-typ_SF"/>
</dbReference>
<dbReference type="InterPro" id="IPR014721">
    <property type="entry name" value="Ribsml_uS5_D2-typ_fold_subgr"/>
</dbReference>
<dbReference type="NCBIfam" id="TIGR00763">
    <property type="entry name" value="lon"/>
    <property type="match status" value="1"/>
</dbReference>
<dbReference type="NCBIfam" id="NF008053">
    <property type="entry name" value="PRK10787.1"/>
    <property type="match status" value="1"/>
</dbReference>
<dbReference type="PANTHER" id="PTHR10046">
    <property type="entry name" value="ATP DEPENDENT LON PROTEASE FAMILY MEMBER"/>
    <property type="match status" value="1"/>
</dbReference>
<dbReference type="Pfam" id="PF00004">
    <property type="entry name" value="AAA"/>
    <property type="match status" value="1"/>
</dbReference>
<dbReference type="Pfam" id="PF05362">
    <property type="entry name" value="Lon_C"/>
    <property type="match status" value="1"/>
</dbReference>
<dbReference type="Pfam" id="PF22667">
    <property type="entry name" value="Lon_lid"/>
    <property type="match status" value="1"/>
</dbReference>
<dbReference type="Pfam" id="PF02190">
    <property type="entry name" value="LON_substr_bdg"/>
    <property type="match status" value="1"/>
</dbReference>
<dbReference type="PIRSF" id="PIRSF001174">
    <property type="entry name" value="Lon_proteas"/>
    <property type="match status" value="1"/>
</dbReference>
<dbReference type="PRINTS" id="PR00830">
    <property type="entry name" value="ENDOLAPTASE"/>
</dbReference>
<dbReference type="SMART" id="SM00382">
    <property type="entry name" value="AAA"/>
    <property type="match status" value="1"/>
</dbReference>
<dbReference type="SMART" id="SM00464">
    <property type="entry name" value="LON"/>
    <property type="match status" value="1"/>
</dbReference>
<dbReference type="SUPFAM" id="SSF52540">
    <property type="entry name" value="P-loop containing nucleoside triphosphate hydrolases"/>
    <property type="match status" value="1"/>
</dbReference>
<dbReference type="SUPFAM" id="SSF88697">
    <property type="entry name" value="PUA domain-like"/>
    <property type="match status" value="1"/>
</dbReference>
<dbReference type="SUPFAM" id="SSF54211">
    <property type="entry name" value="Ribosomal protein S5 domain 2-like"/>
    <property type="match status" value="1"/>
</dbReference>
<dbReference type="PROSITE" id="PS51787">
    <property type="entry name" value="LON_N"/>
    <property type="match status" value="1"/>
</dbReference>
<dbReference type="PROSITE" id="PS51786">
    <property type="entry name" value="LON_PROTEOLYTIC"/>
    <property type="match status" value="1"/>
</dbReference>
<dbReference type="PROSITE" id="PS01046">
    <property type="entry name" value="LON_SER"/>
    <property type="match status" value="1"/>
</dbReference>
<keyword id="KW-0067">ATP-binding</keyword>
<keyword id="KW-0963">Cytoplasm</keyword>
<keyword id="KW-0378">Hydrolase</keyword>
<keyword id="KW-0547">Nucleotide-binding</keyword>
<keyword id="KW-0645">Protease</keyword>
<keyword id="KW-0720">Serine protease</keyword>
<keyword id="KW-0346">Stress response</keyword>
<gene>
    <name evidence="1" type="primary">lon</name>
    <name type="ordered locus">NSE_0347</name>
</gene>